<proteinExistence type="inferred from homology"/>
<name>MNTH_PEDPA</name>
<evidence type="ECO:0000255" key="1">
    <source>
        <dbReference type="HAMAP-Rule" id="MF_00221"/>
    </source>
</evidence>
<dbReference type="EMBL" id="CP000422">
    <property type="protein sequence ID" value="ABJ68722.1"/>
    <property type="molecule type" value="Genomic_DNA"/>
</dbReference>
<dbReference type="RefSeq" id="WP_002832868.1">
    <property type="nucleotide sequence ID" value="NC_008525.1"/>
</dbReference>
<dbReference type="SMR" id="Q03DK0"/>
<dbReference type="STRING" id="278197.PEPE_1701"/>
<dbReference type="GeneID" id="33061942"/>
<dbReference type="KEGG" id="ppe:PEPE_1701"/>
<dbReference type="eggNOG" id="COG1914">
    <property type="taxonomic scope" value="Bacteria"/>
</dbReference>
<dbReference type="HOGENOM" id="CLU_020088_2_0_9"/>
<dbReference type="OrthoDB" id="9787548at2"/>
<dbReference type="Proteomes" id="UP000000773">
    <property type="component" value="Chromosome"/>
</dbReference>
<dbReference type="GO" id="GO:0005886">
    <property type="term" value="C:plasma membrane"/>
    <property type="evidence" value="ECO:0007669"/>
    <property type="project" value="UniProtKB-SubCell"/>
</dbReference>
<dbReference type="GO" id="GO:0015086">
    <property type="term" value="F:cadmium ion transmembrane transporter activity"/>
    <property type="evidence" value="ECO:0007669"/>
    <property type="project" value="TreeGrafter"/>
</dbReference>
<dbReference type="GO" id="GO:0005384">
    <property type="term" value="F:manganese ion transmembrane transporter activity"/>
    <property type="evidence" value="ECO:0007669"/>
    <property type="project" value="TreeGrafter"/>
</dbReference>
<dbReference type="GO" id="GO:0046872">
    <property type="term" value="F:metal ion binding"/>
    <property type="evidence" value="ECO:0007669"/>
    <property type="project" value="UniProtKB-UniRule"/>
</dbReference>
<dbReference type="GO" id="GO:0015293">
    <property type="term" value="F:symporter activity"/>
    <property type="evidence" value="ECO:0007669"/>
    <property type="project" value="UniProtKB-UniRule"/>
</dbReference>
<dbReference type="GO" id="GO:0034755">
    <property type="term" value="P:iron ion transmembrane transport"/>
    <property type="evidence" value="ECO:0007669"/>
    <property type="project" value="TreeGrafter"/>
</dbReference>
<dbReference type="HAMAP" id="MF_00221">
    <property type="entry name" value="NRAMP"/>
    <property type="match status" value="1"/>
</dbReference>
<dbReference type="InterPro" id="IPR001046">
    <property type="entry name" value="NRAMP_fam"/>
</dbReference>
<dbReference type="NCBIfam" id="TIGR01197">
    <property type="entry name" value="nramp"/>
    <property type="match status" value="1"/>
</dbReference>
<dbReference type="NCBIfam" id="NF037982">
    <property type="entry name" value="Nramp_1"/>
    <property type="match status" value="1"/>
</dbReference>
<dbReference type="NCBIfam" id="NF001923">
    <property type="entry name" value="PRK00701.1"/>
    <property type="match status" value="1"/>
</dbReference>
<dbReference type="PANTHER" id="PTHR11706:SF33">
    <property type="entry name" value="NATURAL RESISTANCE-ASSOCIATED MACROPHAGE PROTEIN 2"/>
    <property type="match status" value="1"/>
</dbReference>
<dbReference type="PANTHER" id="PTHR11706">
    <property type="entry name" value="SOLUTE CARRIER PROTEIN FAMILY 11 MEMBER"/>
    <property type="match status" value="1"/>
</dbReference>
<dbReference type="Pfam" id="PF01566">
    <property type="entry name" value="Nramp"/>
    <property type="match status" value="1"/>
</dbReference>
<dbReference type="PRINTS" id="PR00447">
    <property type="entry name" value="NATRESASSCMP"/>
</dbReference>
<gene>
    <name evidence="1" type="primary">mntH</name>
    <name type="ordered locus">PEPE_1701</name>
</gene>
<accession>Q03DK0</accession>
<sequence length="447" mass="48620">MSEKLDEVDSKSLDEINGSIKVPKNAGFWKTLMAYSGPGFLIAVGYMDPGNWITSIAGGAQFRYTLLSVILLSSLIAMLLQAMSARLGIVTGKDLAQLTRERTSKRVGFLLWIVAELAIMATDIAEIIGSGIALELLFHIPLIIGILITAADVLILLLLMKLGFRKIEAIVATLVAVILIVFAYEVLLSDPSISGIIKGYVPSVEILGNNSMLYLSLGIVGATVMPHDLYLGSSISQTREVDRKDRENVAQAIRFSTIDSNMQLFLAFIVNSLLLILGAALFYGTDSSLGRFVDLFNALSNNQIVGAIASPVLSMLFAVALLASGQSSTITGTLSGQIIMEGFIRLRVPLWVQRLVTRVLSVAPVLIFAIYYHGDEAKIENLLTFSQVFLSVALPFAVIPLVIYTSSKKLMGEFANRAWVKWCAWTATIVLILLNIYLILQTLGLIK</sequence>
<protein>
    <recommendedName>
        <fullName evidence="1">Divalent metal cation transporter MntH</fullName>
    </recommendedName>
</protein>
<organism>
    <name type="scientific">Pediococcus pentosaceus (strain ATCC 25745 / CCUG 21536 / LMG 10740 / 183-1w)</name>
    <dbReference type="NCBI Taxonomy" id="278197"/>
    <lineage>
        <taxon>Bacteria</taxon>
        <taxon>Bacillati</taxon>
        <taxon>Bacillota</taxon>
        <taxon>Bacilli</taxon>
        <taxon>Lactobacillales</taxon>
        <taxon>Lactobacillaceae</taxon>
        <taxon>Pediococcus</taxon>
    </lineage>
</organism>
<comment type="function">
    <text evidence="1">H(+)-stimulated, divalent metal cation uptake system.</text>
</comment>
<comment type="subcellular location">
    <subcellularLocation>
        <location evidence="1">Cell membrane</location>
        <topology evidence="1">Multi-pass membrane protein</topology>
    </subcellularLocation>
</comment>
<comment type="similarity">
    <text evidence="1">Belongs to the NRAMP family.</text>
</comment>
<keyword id="KW-1003">Cell membrane</keyword>
<keyword id="KW-0406">Ion transport</keyword>
<keyword id="KW-0472">Membrane</keyword>
<keyword id="KW-0769">Symport</keyword>
<keyword id="KW-0812">Transmembrane</keyword>
<keyword id="KW-1133">Transmembrane helix</keyword>
<keyword id="KW-0813">Transport</keyword>
<feature type="chain" id="PRO_0000325608" description="Divalent metal cation transporter MntH">
    <location>
        <begin position="1"/>
        <end position="447"/>
    </location>
</feature>
<feature type="transmembrane region" description="Helical" evidence="1">
    <location>
        <begin position="26"/>
        <end position="48"/>
    </location>
</feature>
<feature type="transmembrane region" description="Helical" evidence="1">
    <location>
        <begin position="65"/>
        <end position="85"/>
    </location>
</feature>
<feature type="transmembrane region" description="Helical" evidence="1">
    <location>
        <begin position="108"/>
        <end position="128"/>
    </location>
</feature>
<feature type="transmembrane region" description="Helical" evidence="1">
    <location>
        <begin position="140"/>
        <end position="160"/>
    </location>
</feature>
<feature type="transmembrane region" description="Helical" evidence="1">
    <location>
        <begin position="169"/>
        <end position="189"/>
    </location>
</feature>
<feature type="transmembrane region" description="Helical" evidence="1">
    <location>
        <begin position="212"/>
        <end position="232"/>
    </location>
</feature>
<feature type="transmembrane region" description="Helical" evidence="1">
    <location>
        <begin position="264"/>
        <end position="284"/>
    </location>
</feature>
<feature type="transmembrane region" description="Helical" evidence="1">
    <location>
        <begin position="304"/>
        <end position="324"/>
    </location>
</feature>
<feature type="transmembrane region" description="Helical" evidence="1">
    <location>
        <begin position="359"/>
        <end position="379"/>
    </location>
</feature>
<feature type="transmembrane region" description="Helical" evidence="1">
    <location>
        <begin position="383"/>
        <end position="403"/>
    </location>
</feature>
<feature type="transmembrane region" description="Helical" evidence="1">
    <location>
        <begin position="426"/>
        <end position="446"/>
    </location>
</feature>
<reference key="1">
    <citation type="journal article" date="2006" name="Proc. Natl. Acad. Sci. U.S.A.">
        <title>Comparative genomics of the lactic acid bacteria.</title>
        <authorList>
            <person name="Makarova K.S."/>
            <person name="Slesarev A."/>
            <person name="Wolf Y.I."/>
            <person name="Sorokin A."/>
            <person name="Mirkin B."/>
            <person name="Koonin E.V."/>
            <person name="Pavlov A."/>
            <person name="Pavlova N."/>
            <person name="Karamychev V."/>
            <person name="Polouchine N."/>
            <person name="Shakhova V."/>
            <person name="Grigoriev I."/>
            <person name="Lou Y."/>
            <person name="Rohksar D."/>
            <person name="Lucas S."/>
            <person name="Huang K."/>
            <person name="Goodstein D.M."/>
            <person name="Hawkins T."/>
            <person name="Plengvidhya V."/>
            <person name="Welker D."/>
            <person name="Hughes J."/>
            <person name="Goh Y."/>
            <person name="Benson A."/>
            <person name="Baldwin K."/>
            <person name="Lee J.-H."/>
            <person name="Diaz-Muniz I."/>
            <person name="Dosti B."/>
            <person name="Smeianov V."/>
            <person name="Wechter W."/>
            <person name="Barabote R."/>
            <person name="Lorca G."/>
            <person name="Altermann E."/>
            <person name="Barrangou R."/>
            <person name="Ganesan B."/>
            <person name="Xie Y."/>
            <person name="Rawsthorne H."/>
            <person name="Tamir D."/>
            <person name="Parker C."/>
            <person name="Breidt F."/>
            <person name="Broadbent J.R."/>
            <person name="Hutkins R."/>
            <person name="O'Sullivan D."/>
            <person name="Steele J."/>
            <person name="Unlu G."/>
            <person name="Saier M.H. Jr."/>
            <person name="Klaenhammer T."/>
            <person name="Richardson P."/>
            <person name="Kozyavkin S."/>
            <person name="Weimer B.C."/>
            <person name="Mills D.A."/>
        </authorList>
    </citation>
    <scope>NUCLEOTIDE SEQUENCE [LARGE SCALE GENOMIC DNA]</scope>
    <source>
        <strain>ATCC 25745 / CCUG 21536 / LMG 10740 / 183-1w</strain>
    </source>
</reference>